<name>PSTB_EDWTA</name>
<protein>
    <recommendedName>
        <fullName evidence="1">Phosphate import ATP-binding protein PstB</fullName>
        <ecNumber evidence="1">7.3.2.1</ecNumber>
    </recommendedName>
    <alternativeName>
        <fullName evidence="1">ABC phosphate transporter</fullName>
    </alternativeName>
    <alternativeName>
        <fullName>Peripheral membrane protein B</fullName>
    </alternativeName>
    <alternativeName>
        <fullName evidence="1">Phosphate-transporting ATPase</fullName>
    </alternativeName>
</protein>
<proteinExistence type="inferred from homology"/>
<feature type="chain" id="PRO_0000092813" description="Phosphate import ATP-binding protein PstB">
    <location>
        <begin position="1"/>
        <end position="259"/>
    </location>
</feature>
<feature type="domain" description="ABC transporter" evidence="1">
    <location>
        <begin position="13"/>
        <end position="254"/>
    </location>
</feature>
<feature type="binding site" evidence="1">
    <location>
        <begin position="45"/>
        <end position="52"/>
    </location>
    <ligand>
        <name>ATP</name>
        <dbReference type="ChEBI" id="CHEBI:30616"/>
    </ligand>
</feature>
<feature type="sequence conflict" description="In Ref. 1; AAM45396." evidence="2" ref="1">
    <original>P</original>
    <variation>T</variation>
    <location>
        <position position="8"/>
    </location>
</feature>
<feature type="sequence conflict" description="In Ref. 1; AAM45396." evidence="2" ref="1">
    <original>K</original>
    <variation>Q</variation>
    <location>
        <position position="37"/>
    </location>
</feature>
<feature type="sequence conflict" description="In Ref. 1; AAM45396." evidence="2" ref="1">
    <original>S</original>
    <variation>N</variation>
    <location>
        <position position="143"/>
    </location>
</feature>
<feature type="sequence conflict" description="In Ref. 1; AAM45396." evidence="2" ref="1">
    <original>A</original>
    <variation>G</variation>
    <location>
        <position position="171"/>
    </location>
</feature>
<sequence>MSNVVTDPTNSKIQVRDLNFYYGKFHALKNISLDIEKNKVTAFIGPSGCGKSTLLRTFNKMFQLYPEQRAEGEILLDGQNILTDSQDVALLRAKVGMVFQKPTPFPMSIYDNIAFGVRLFEKLSRADMDERVQWALTKAALWSETKDKLHQSGYSLSGGQQQRLCIARGIAIRPEVLLLDEPCSALDPISTSRIEELITELKQDYTVVIVTHNMQQAARCSDYTAFMYLGELIEFSDTDKLFTAPAQRQTEDYITGRYG</sequence>
<evidence type="ECO:0000255" key="1">
    <source>
        <dbReference type="HAMAP-Rule" id="MF_01702"/>
    </source>
</evidence>
<evidence type="ECO:0000305" key="2"/>
<accession>Q9AML4</accession>
<accession>Q79RI8</accession>
<accession>Q8KY87</accession>
<dbReference type="EC" id="7.3.2.1" evidence="1"/>
<dbReference type="EMBL" id="AF248495">
    <property type="protein sequence ID" value="AAM45396.1"/>
    <property type="molecule type" value="Genomic_DNA"/>
</dbReference>
<dbReference type="EMBL" id="AF324340">
    <property type="protein sequence ID" value="AAK12106.1"/>
    <property type="molecule type" value="Genomic_DNA"/>
</dbReference>
<dbReference type="EMBL" id="AY090560">
    <property type="protein sequence ID" value="AAN05784.1"/>
    <property type="molecule type" value="Genomic_DNA"/>
</dbReference>
<dbReference type="SMR" id="Q9AML4"/>
<dbReference type="STRING" id="636.AAW15_16105"/>
<dbReference type="GO" id="GO:0005886">
    <property type="term" value="C:plasma membrane"/>
    <property type="evidence" value="ECO:0007669"/>
    <property type="project" value="UniProtKB-SubCell"/>
</dbReference>
<dbReference type="GO" id="GO:0005524">
    <property type="term" value="F:ATP binding"/>
    <property type="evidence" value="ECO:0007669"/>
    <property type="project" value="UniProtKB-KW"/>
</dbReference>
<dbReference type="GO" id="GO:0016887">
    <property type="term" value="F:ATP hydrolysis activity"/>
    <property type="evidence" value="ECO:0007669"/>
    <property type="project" value="InterPro"/>
</dbReference>
<dbReference type="GO" id="GO:0015415">
    <property type="term" value="F:ATPase-coupled phosphate ion transmembrane transporter activity"/>
    <property type="evidence" value="ECO:0007669"/>
    <property type="project" value="UniProtKB-EC"/>
</dbReference>
<dbReference type="GO" id="GO:0035435">
    <property type="term" value="P:phosphate ion transmembrane transport"/>
    <property type="evidence" value="ECO:0007669"/>
    <property type="project" value="InterPro"/>
</dbReference>
<dbReference type="CDD" id="cd03260">
    <property type="entry name" value="ABC_PstB_phosphate_transporter"/>
    <property type="match status" value="1"/>
</dbReference>
<dbReference type="FunFam" id="3.40.50.300:FF:000132">
    <property type="entry name" value="Phosphate import ATP-binding protein PstB"/>
    <property type="match status" value="1"/>
</dbReference>
<dbReference type="Gene3D" id="3.40.50.300">
    <property type="entry name" value="P-loop containing nucleotide triphosphate hydrolases"/>
    <property type="match status" value="1"/>
</dbReference>
<dbReference type="InterPro" id="IPR003593">
    <property type="entry name" value="AAA+_ATPase"/>
</dbReference>
<dbReference type="InterPro" id="IPR003439">
    <property type="entry name" value="ABC_transporter-like_ATP-bd"/>
</dbReference>
<dbReference type="InterPro" id="IPR017871">
    <property type="entry name" value="ABC_transporter-like_CS"/>
</dbReference>
<dbReference type="InterPro" id="IPR027417">
    <property type="entry name" value="P-loop_NTPase"/>
</dbReference>
<dbReference type="InterPro" id="IPR005670">
    <property type="entry name" value="PstB-like"/>
</dbReference>
<dbReference type="NCBIfam" id="TIGR00972">
    <property type="entry name" value="3a0107s01c2"/>
    <property type="match status" value="1"/>
</dbReference>
<dbReference type="PANTHER" id="PTHR43423">
    <property type="entry name" value="ABC TRANSPORTER I FAMILY MEMBER 17"/>
    <property type="match status" value="1"/>
</dbReference>
<dbReference type="PANTHER" id="PTHR43423:SF3">
    <property type="entry name" value="PHOSPHATE IMPORT ATP-BINDING PROTEIN PSTB"/>
    <property type="match status" value="1"/>
</dbReference>
<dbReference type="Pfam" id="PF00005">
    <property type="entry name" value="ABC_tran"/>
    <property type="match status" value="1"/>
</dbReference>
<dbReference type="SMART" id="SM00382">
    <property type="entry name" value="AAA"/>
    <property type="match status" value="1"/>
</dbReference>
<dbReference type="SUPFAM" id="SSF52540">
    <property type="entry name" value="P-loop containing nucleoside triphosphate hydrolases"/>
    <property type="match status" value="1"/>
</dbReference>
<dbReference type="PROSITE" id="PS00211">
    <property type="entry name" value="ABC_TRANSPORTER_1"/>
    <property type="match status" value="1"/>
</dbReference>
<dbReference type="PROSITE" id="PS50893">
    <property type="entry name" value="ABC_TRANSPORTER_2"/>
    <property type="match status" value="1"/>
</dbReference>
<dbReference type="PROSITE" id="PS51238">
    <property type="entry name" value="PSTB"/>
    <property type="match status" value="1"/>
</dbReference>
<keyword id="KW-0067">ATP-binding</keyword>
<keyword id="KW-0997">Cell inner membrane</keyword>
<keyword id="KW-1003">Cell membrane</keyword>
<keyword id="KW-0472">Membrane</keyword>
<keyword id="KW-0547">Nucleotide-binding</keyword>
<keyword id="KW-0592">Phosphate transport</keyword>
<keyword id="KW-1278">Translocase</keyword>
<keyword id="KW-0813">Transport</keyword>
<gene>
    <name evidence="1" type="primary">pstB</name>
</gene>
<organism>
    <name type="scientific">Edwardsiella tarda</name>
    <dbReference type="NCBI Taxonomy" id="636"/>
    <lineage>
        <taxon>Bacteria</taxon>
        <taxon>Pseudomonadati</taxon>
        <taxon>Pseudomonadota</taxon>
        <taxon>Gammaproteobacteria</taxon>
        <taxon>Enterobacterales</taxon>
        <taxon>Hafniaceae</taxon>
        <taxon>Edwardsiella</taxon>
    </lineage>
</organism>
<comment type="function">
    <text>Part of the ABC transporter complex PstSACB involved in phosphate import. Responsible for energy coupling to the transport system.</text>
</comment>
<comment type="catalytic activity">
    <reaction evidence="1">
        <text>phosphate(out) + ATP + H2O = ADP + 2 phosphate(in) + H(+)</text>
        <dbReference type="Rhea" id="RHEA:24440"/>
        <dbReference type="ChEBI" id="CHEBI:15377"/>
        <dbReference type="ChEBI" id="CHEBI:15378"/>
        <dbReference type="ChEBI" id="CHEBI:30616"/>
        <dbReference type="ChEBI" id="CHEBI:43474"/>
        <dbReference type="ChEBI" id="CHEBI:456216"/>
        <dbReference type="EC" id="7.3.2.1"/>
    </reaction>
</comment>
<comment type="subunit">
    <text evidence="1">The complex is composed of two ATP-binding proteins (PstB), two transmembrane proteins (PstC and PstA) and a solute-binding protein (PstS).</text>
</comment>
<comment type="subcellular location">
    <subcellularLocation>
        <location evidence="1">Cell inner membrane</location>
        <topology evidence="1">Peripheral membrane protein</topology>
    </subcellularLocation>
</comment>
<comment type="similarity">
    <text evidence="1">Belongs to the ABC transporter superfamily. Phosphate importer (TC 3.A.1.7) family.</text>
</comment>
<reference key="1">
    <citation type="submission" date="2000-03" db="EMBL/GenBank/DDBJ databases">
        <authorList>
            <person name="Tan Y.P."/>
            <person name="Leung K.Y."/>
        </authorList>
    </citation>
    <scope>NUCLEOTIDE SEQUENCE [GENOMIC DNA]</scope>
</reference>
<reference key="2">
    <citation type="journal article" date="2001" name="Microbiology">
        <title>Edwardsiella tarda mutants defective in siderophore production, motility, serum resistance and catalase activity.</title>
        <authorList>
            <person name="Mathew J.A."/>
            <person name="Tan Y.P."/>
            <person name="Srinivasa Rao P.S."/>
            <person name="Lim T.M."/>
            <person name="Leung K.Y."/>
        </authorList>
    </citation>
    <scope>NUCLEOTIDE SEQUENCE [GENOMIC DNA]</scope>
    <source>
        <strain>PPD130/91</strain>
    </source>
</reference>
<reference key="3">
    <citation type="journal article" date="2003" name="Infect. Immun.">
        <title>Functional genomics approach to the identification of virulence genes involved in Edwardsiella tarda pathogenesis.</title>
        <authorList>
            <person name="Srinivasa Rao P.S."/>
            <person name="Lim T.M."/>
            <person name="Leung K.Y."/>
        </authorList>
    </citation>
    <scope>NUCLEOTIDE SEQUENCE [GENOMIC DNA]</scope>
    <source>
        <strain>PPD130/91</strain>
    </source>
</reference>